<feature type="chain" id="PRO_1000146426" description="Small ribosomal subunit protein uS9">
    <location>
        <begin position="1"/>
        <end position="155"/>
    </location>
</feature>
<sequence length="155" mass="16772">MADLSSLKDLGTAQEASAPVHVRKVDAQGRAYATGKRKNAIARVWVKPGTGKITVNGRDFPVYFARPVLQMILQQPVVAAARTGQFDVIATVTGGGLSGQAGAVRHGISKALTYFEPGLRSVLKKGGFLTRDSRVVERKKYGKAKARRSFQFSKR</sequence>
<protein>
    <recommendedName>
        <fullName evidence="1">Small ribosomal subunit protein uS9</fullName>
    </recommendedName>
    <alternativeName>
        <fullName evidence="2">30S ribosomal protein S9</fullName>
    </alternativeName>
</protein>
<dbReference type="EMBL" id="CP000633">
    <property type="protein sequence ID" value="ACM36204.1"/>
    <property type="molecule type" value="Genomic_DNA"/>
</dbReference>
<dbReference type="RefSeq" id="WP_015915627.1">
    <property type="nucleotide sequence ID" value="NC_011989.1"/>
</dbReference>
<dbReference type="SMR" id="B9JVC4"/>
<dbReference type="STRING" id="311402.Avi_1681"/>
<dbReference type="GeneID" id="60682282"/>
<dbReference type="KEGG" id="avi:Avi_1681"/>
<dbReference type="eggNOG" id="COG0103">
    <property type="taxonomic scope" value="Bacteria"/>
</dbReference>
<dbReference type="HOGENOM" id="CLU_046483_2_0_5"/>
<dbReference type="Proteomes" id="UP000001596">
    <property type="component" value="Chromosome 1"/>
</dbReference>
<dbReference type="GO" id="GO:0022627">
    <property type="term" value="C:cytosolic small ribosomal subunit"/>
    <property type="evidence" value="ECO:0007669"/>
    <property type="project" value="TreeGrafter"/>
</dbReference>
<dbReference type="GO" id="GO:0003723">
    <property type="term" value="F:RNA binding"/>
    <property type="evidence" value="ECO:0007669"/>
    <property type="project" value="TreeGrafter"/>
</dbReference>
<dbReference type="GO" id="GO:0003735">
    <property type="term" value="F:structural constituent of ribosome"/>
    <property type="evidence" value="ECO:0007669"/>
    <property type="project" value="InterPro"/>
</dbReference>
<dbReference type="GO" id="GO:0006412">
    <property type="term" value="P:translation"/>
    <property type="evidence" value="ECO:0007669"/>
    <property type="project" value="UniProtKB-UniRule"/>
</dbReference>
<dbReference type="FunFam" id="3.30.230.10:FF:000034">
    <property type="entry name" value="30S ribosomal protein S9"/>
    <property type="match status" value="1"/>
</dbReference>
<dbReference type="Gene3D" id="3.30.230.10">
    <property type="match status" value="1"/>
</dbReference>
<dbReference type="HAMAP" id="MF_00532_B">
    <property type="entry name" value="Ribosomal_uS9_B"/>
    <property type="match status" value="1"/>
</dbReference>
<dbReference type="InterPro" id="IPR020568">
    <property type="entry name" value="Ribosomal_Su5_D2-typ_SF"/>
</dbReference>
<dbReference type="InterPro" id="IPR000754">
    <property type="entry name" value="Ribosomal_uS9"/>
</dbReference>
<dbReference type="InterPro" id="IPR023035">
    <property type="entry name" value="Ribosomal_uS9_bac/plastid"/>
</dbReference>
<dbReference type="InterPro" id="IPR020574">
    <property type="entry name" value="Ribosomal_uS9_CS"/>
</dbReference>
<dbReference type="InterPro" id="IPR014721">
    <property type="entry name" value="Ribsml_uS5_D2-typ_fold_subgr"/>
</dbReference>
<dbReference type="NCBIfam" id="NF001099">
    <property type="entry name" value="PRK00132.1"/>
    <property type="match status" value="1"/>
</dbReference>
<dbReference type="PANTHER" id="PTHR21569">
    <property type="entry name" value="RIBOSOMAL PROTEIN S9"/>
    <property type="match status" value="1"/>
</dbReference>
<dbReference type="PANTHER" id="PTHR21569:SF1">
    <property type="entry name" value="SMALL RIBOSOMAL SUBUNIT PROTEIN US9M"/>
    <property type="match status" value="1"/>
</dbReference>
<dbReference type="Pfam" id="PF00380">
    <property type="entry name" value="Ribosomal_S9"/>
    <property type="match status" value="1"/>
</dbReference>
<dbReference type="SUPFAM" id="SSF54211">
    <property type="entry name" value="Ribosomal protein S5 domain 2-like"/>
    <property type="match status" value="1"/>
</dbReference>
<dbReference type="PROSITE" id="PS00360">
    <property type="entry name" value="RIBOSOMAL_S9"/>
    <property type="match status" value="1"/>
</dbReference>
<evidence type="ECO:0000255" key="1">
    <source>
        <dbReference type="HAMAP-Rule" id="MF_00532"/>
    </source>
</evidence>
<evidence type="ECO:0000305" key="2"/>
<proteinExistence type="inferred from homology"/>
<reference key="1">
    <citation type="journal article" date="2009" name="J. Bacteriol.">
        <title>Genome sequences of three Agrobacterium biovars help elucidate the evolution of multichromosome genomes in bacteria.</title>
        <authorList>
            <person name="Slater S.C."/>
            <person name="Goldman B.S."/>
            <person name="Goodner B."/>
            <person name="Setubal J.C."/>
            <person name="Farrand S.K."/>
            <person name="Nester E.W."/>
            <person name="Burr T.J."/>
            <person name="Banta L."/>
            <person name="Dickerman A.W."/>
            <person name="Paulsen I."/>
            <person name="Otten L."/>
            <person name="Suen G."/>
            <person name="Welch R."/>
            <person name="Almeida N.F."/>
            <person name="Arnold F."/>
            <person name="Burton O.T."/>
            <person name="Du Z."/>
            <person name="Ewing A."/>
            <person name="Godsy E."/>
            <person name="Heisel S."/>
            <person name="Houmiel K.L."/>
            <person name="Jhaveri J."/>
            <person name="Lu J."/>
            <person name="Miller N.M."/>
            <person name="Norton S."/>
            <person name="Chen Q."/>
            <person name="Phoolcharoen W."/>
            <person name="Ohlin V."/>
            <person name="Ondrusek D."/>
            <person name="Pride N."/>
            <person name="Stricklin S.L."/>
            <person name="Sun J."/>
            <person name="Wheeler C."/>
            <person name="Wilson L."/>
            <person name="Zhu H."/>
            <person name="Wood D.W."/>
        </authorList>
    </citation>
    <scope>NUCLEOTIDE SEQUENCE [LARGE SCALE GENOMIC DNA]</scope>
    <source>
        <strain>ATCC BAA-846 / DSM 112012 / S4</strain>
    </source>
</reference>
<organism>
    <name type="scientific">Allorhizobium ampelinum (strain ATCC BAA-846 / DSM 112012 / S4)</name>
    <name type="common">Agrobacterium vitis (strain S4)</name>
    <dbReference type="NCBI Taxonomy" id="311402"/>
    <lineage>
        <taxon>Bacteria</taxon>
        <taxon>Pseudomonadati</taxon>
        <taxon>Pseudomonadota</taxon>
        <taxon>Alphaproteobacteria</taxon>
        <taxon>Hyphomicrobiales</taxon>
        <taxon>Rhizobiaceae</taxon>
        <taxon>Rhizobium/Agrobacterium group</taxon>
        <taxon>Allorhizobium</taxon>
        <taxon>Allorhizobium ampelinum</taxon>
    </lineage>
</organism>
<keyword id="KW-1185">Reference proteome</keyword>
<keyword id="KW-0687">Ribonucleoprotein</keyword>
<keyword id="KW-0689">Ribosomal protein</keyword>
<accession>B9JVC4</accession>
<comment type="similarity">
    <text evidence="1">Belongs to the universal ribosomal protein uS9 family.</text>
</comment>
<gene>
    <name evidence="1" type="primary">rpsI</name>
    <name type="ordered locus">Avi_1681</name>
</gene>
<name>RS9_ALLAM</name>